<gene>
    <name evidence="1" type="primary">ruvA</name>
    <name type="ordered locus">RT0374</name>
</gene>
<feature type="chain" id="PRO_0000224903" description="Holliday junction branch migration complex subunit RuvA">
    <location>
        <begin position="1"/>
        <end position="200"/>
    </location>
</feature>
<feature type="region of interest" description="Domain I" evidence="1">
    <location>
        <begin position="1"/>
        <end position="63"/>
    </location>
</feature>
<feature type="region of interest" description="Domain II" evidence="1">
    <location>
        <begin position="64"/>
        <end position="142"/>
    </location>
</feature>
<feature type="region of interest" description="Flexible linker" evidence="1">
    <location>
        <begin position="142"/>
        <end position="146"/>
    </location>
</feature>
<feature type="region of interest" description="Domain III" evidence="1">
    <location>
        <begin position="147"/>
        <end position="200"/>
    </location>
</feature>
<reference key="1">
    <citation type="journal article" date="2004" name="J. Bacteriol.">
        <title>Complete genome sequence of Rickettsia typhi and comparison with sequences of other Rickettsiae.</title>
        <authorList>
            <person name="McLeod M.P."/>
            <person name="Qin X."/>
            <person name="Karpathy S.E."/>
            <person name="Gioia J."/>
            <person name="Highlander S.K."/>
            <person name="Fox G.E."/>
            <person name="McNeill T.Z."/>
            <person name="Jiang H."/>
            <person name="Muzny D."/>
            <person name="Jacob L.S."/>
            <person name="Hawes A.C."/>
            <person name="Sodergren E."/>
            <person name="Gill R."/>
            <person name="Hume J."/>
            <person name="Morgan M."/>
            <person name="Fan G."/>
            <person name="Amin A.G."/>
            <person name="Gibbs R.A."/>
            <person name="Hong C."/>
            <person name="Yu X.-J."/>
            <person name="Walker D.H."/>
            <person name="Weinstock G.M."/>
        </authorList>
    </citation>
    <scope>NUCLEOTIDE SEQUENCE [LARGE SCALE GENOMIC DNA]</scope>
    <source>
        <strain>ATCC VR-144 / Wilmington</strain>
    </source>
</reference>
<dbReference type="EMBL" id="AE017197">
    <property type="protein sequence ID" value="AAU03851.1"/>
    <property type="molecule type" value="Genomic_DNA"/>
</dbReference>
<dbReference type="RefSeq" id="WP_011190835.1">
    <property type="nucleotide sequence ID" value="NC_006142.1"/>
</dbReference>
<dbReference type="SMR" id="Q68WZ1"/>
<dbReference type="KEGG" id="rty:RT0374"/>
<dbReference type="eggNOG" id="COG0632">
    <property type="taxonomic scope" value="Bacteria"/>
</dbReference>
<dbReference type="HOGENOM" id="CLU_087936_3_0_5"/>
<dbReference type="OrthoDB" id="5293449at2"/>
<dbReference type="Proteomes" id="UP000000604">
    <property type="component" value="Chromosome"/>
</dbReference>
<dbReference type="GO" id="GO:0005737">
    <property type="term" value="C:cytoplasm"/>
    <property type="evidence" value="ECO:0007669"/>
    <property type="project" value="UniProtKB-SubCell"/>
</dbReference>
<dbReference type="GO" id="GO:0009379">
    <property type="term" value="C:Holliday junction helicase complex"/>
    <property type="evidence" value="ECO:0007669"/>
    <property type="project" value="InterPro"/>
</dbReference>
<dbReference type="GO" id="GO:0048476">
    <property type="term" value="C:Holliday junction resolvase complex"/>
    <property type="evidence" value="ECO:0007669"/>
    <property type="project" value="UniProtKB-UniRule"/>
</dbReference>
<dbReference type="GO" id="GO:0005524">
    <property type="term" value="F:ATP binding"/>
    <property type="evidence" value="ECO:0007669"/>
    <property type="project" value="InterPro"/>
</dbReference>
<dbReference type="GO" id="GO:0000400">
    <property type="term" value="F:four-way junction DNA binding"/>
    <property type="evidence" value="ECO:0007669"/>
    <property type="project" value="UniProtKB-UniRule"/>
</dbReference>
<dbReference type="GO" id="GO:0009378">
    <property type="term" value="F:four-way junction helicase activity"/>
    <property type="evidence" value="ECO:0007669"/>
    <property type="project" value="InterPro"/>
</dbReference>
<dbReference type="GO" id="GO:0006310">
    <property type="term" value="P:DNA recombination"/>
    <property type="evidence" value="ECO:0007669"/>
    <property type="project" value="UniProtKB-UniRule"/>
</dbReference>
<dbReference type="GO" id="GO:0006281">
    <property type="term" value="P:DNA repair"/>
    <property type="evidence" value="ECO:0007669"/>
    <property type="project" value="UniProtKB-UniRule"/>
</dbReference>
<dbReference type="CDD" id="cd14332">
    <property type="entry name" value="UBA_RuvA_C"/>
    <property type="match status" value="1"/>
</dbReference>
<dbReference type="Gene3D" id="1.10.150.20">
    <property type="entry name" value="5' to 3' exonuclease, C-terminal subdomain"/>
    <property type="match status" value="1"/>
</dbReference>
<dbReference type="Gene3D" id="1.10.8.10">
    <property type="entry name" value="DNA helicase RuvA subunit, C-terminal domain"/>
    <property type="match status" value="1"/>
</dbReference>
<dbReference type="Gene3D" id="2.40.50.140">
    <property type="entry name" value="Nucleic acid-binding proteins"/>
    <property type="match status" value="1"/>
</dbReference>
<dbReference type="HAMAP" id="MF_00031">
    <property type="entry name" value="DNA_HJ_migration_RuvA"/>
    <property type="match status" value="1"/>
</dbReference>
<dbReference type="InterPro" id="IPR013849">
    <property type="entry name" value="DNA_helicase_Holl-junc_RuvA_I"/>
</dbReference>
<dbReference type="InterPro" id="IPR012340">
    <property type="entry name" value="NA-bd_OB-fold"/>
</dbReference>
<dbReference type="InterPro" id="IPR000085">
    <property type="entry name" value="RuvA"/>
</dbReference>
<dbReference type="InterPro" id="IPR010994">
    <property type="entry name" value="RuvA_2-like"/>
</dbReference>
<dbReference type="InterPro" id="IPR011114">
    <property type="entry name" value="RuvA_C"/>
</dbReference>
<dbReference type="InterPro" id="IPR036267">
    <property type="entry name" value="RuvA_C_sf"/>
</dbReference>
<dbReference type="NCBIfam" id="TIGR00084">
    <property type="entry name" value="ruvA"/>
    <property type="match status" value="1"/>
</dbReference>
<dbReference type="Pfam" id="PF14520">
    <property type="entry name" value="HHH_5"/>
    <property type="match status" value="1"/>
</dbReference>
<dbReference type="Pfam" id="PF07499">
    <property type="entry name" value="RuvA_C"/>
    <property type="match status" value="1"/>
</dbReference>
<dbReference type="Pfam" id="PF01330">
    <property type="entry name" value="RuvA_N"/>
    <property type="match status" value="1"/>
</dbReference>
<dbReference type="SUPFAM" id="SSF46929">
    <property type="entry name" value="DNA helicase RuvA subunit, C-terminal domain"/>
    <property type="match status" value="1"/>
</dbReference>
<dbReference type="SUPFAM" id="SSF50249">
    <property type="entry name" value="Nucleic acid-binding proteins"/>
    <property type="match status" value="1"/>
</dbReference>
<dbReference type="SUPFAM" id="SSF47781">
    <property type="entry name" value="RuvA domain 2-like"/>
    <property type="match status" value="1"/>
</dbReference>
<evidence type="ECO:0000255" key="1">
    <source>
        <dbReference type="HAMAP-Rule" id="MF_00031"/>
    </source>
</evidence>
<accession>Q68WZ1</accession>
<name>RUVA_RICTY</name>
<keyword id="KW-0963">Cytoplasm</keyword>
<keyword id="KW-0227">DNA damage</keyword>
<keyword id="KW-0233">DNA recombination</keyword>
<keyword id="KW-0234">DNA repair</keyword>
<keyword id="KW-0238">DNA-binding</keyword>
<sequence length="200" mass="22151">MIGKLSGKIDSQCDDYVIIDVNGVGYLVYASGTTLAKLVEGRFYKLFIETHVREEHIHLYGFLTLEEKNFFNLLQSVNGIGTKMALSILSNLTPTDIKIAINNDDKNIFKAISGVGDKLTERIMLELKGKIAKIFSSSAIIKDSSNISSVEINEVIKALVNLGFTRFEAQNTVQGIITQNTKISIDELIKTALKNRNSSF</sequence>
<protein>
    <recommendedName>
        <fullName evidence="1">Holliday junction branch migration complex subunit RuvA</fullName>
    </recommendedName>
</protein>
<organism>
    <name type="scientific">Rickettsia typhi (strain ATCC VR-144 / Wilmington)</name>
    <dbReference type="NCBI Taxonomy" id="257363"/>
    <lineage>
        <taxon>Bacteria</taxon>
        <taxon>Pseudomonadati</taxon>
        <taxon>Pseudomonadota</taxon>
        <taxon>Alphaproteobacteria</taxon>
        <taxon>Rickettsiales</taxon>
        <taxon>Rickettsiaceae</taxon>
        <taxon>Rickettsieae</taxon>
        <taxon>Rickettsia</taxon>
        <taxon>typhus group</taxon>
    </lineage>
</organism>
<proteinExistence type="inferred from homology"/>
<comment type="function">
    <text evidence="1">The RuvA-RuvB-RuvC complex processes Holliday junction (HJ) DNA during genetic recombination and DNA repair, while the RuvA-RuvB complex plays an important role in the rescue of blocked DNA replication forks via replication fork reversal (RFR). RuvA specifically binds to HJ cruciform DNA, conferring on it an open structure. The RuvB hexamer acts as an ATP-dependent pump, pulling dsDNA into and through the RuvAB complex. HJ branch migration allows RuvC to scan DNA until it finds its consensus sequence, where it cleaves and resolves the cruciform DNA.</text>
</comment>
<comment type="subunit">
    <text evidence="1">Homotetramer. Forms an RuvA(8)-RuvB(12)-Holliday junction (HJ) complex. HJ DNA is sandwiched between 2 RuvA tetramers; dsDNA enters through RuvA and exits via RuvB. An RuvB hexamer assembles on each DNA strand where it exits the tetramer. Each RuvB hexamer is contacted by two RuvA subunits (via domain III) on 2 adjacent RuvB subunits; this complex drives branch migration. In the full resolvosome a probable DNA-RuvA(4)-RuvB(12)-RuvC(2) complex forms which resolves the HJ.</text>
</comment>
<comment type="subcellular location">
    <subcellularLocation>
        <location evidence="1">Cytoplasm</location>
    </subcellularLocation>
</comment>
<comment type="domain">
    <text evidence="1">Has three domains with a flexible linker between the domains II and III and assumes an 'L' shape. Domain III is highly mobile and contacts RuvB.</text>
</comment>
<comment type="similarity">
    <text evidence="1">Belongs to the RuvA family.</text>
</comment>